<gene>
    <name type="primary">sst1</name>
</gene>
<sequence>AGCKNFFWKTFTSC</sequence>
<feature type="peptide" id="PRO_0000044371" description="Somatostatin-1">
    <location>
        <begin position="1"/>
        <end position="14"/>
    </location>
</feature>
<feature type="disulfide bond">
    <location>
        <begin position="3"/>
        <end position="14"/>
    </location>
</feature>
<keyword id="KW-0903">Direct protein sequencing</keyword>
<keyword id="KW-1015">Disulfide bond</keyword>
<keyword id="KW-0372">Hormone</keyword>
<keyword id="KW-0964">Secreted</keyword>
<name>SMS1_ANGAN</name>
<accession>P69134</accession>
<accession>P20750</accession>
<evidence type="ECO:0000305" key="1"/>
<protein>
    <recommendedName>
        <fullName>Somatostatin-1</fullName>
    </recommendedName>
    <alternativeName>
        <fullName>Somatostatin I</fullName>
    </alternativeName>
</protein>
<dbReference type="PIR" id="A60840">
    <property type="entry name" value="A60840"/>
</dbReference>
<dbReference type="GO" id="GO:0005576">
    <property type="term" value="C:extracellular region"/>
    <property type="evidence" value="ECO:0007669"/>
    <property type="project" value="UniProtKB-SubCell"/>
</dbReference>
<dbReference type="GO" id="GO:0005179">
    <property type="term" value="F:hormone activity"/>
    <property type="evidence" value="ECO:0007669"/>
    <property type="project" value="UniProtKB-KW"/>
</dbReference>
<dbReference type="InterPro" id="IPR018142">
    <property type="entry name" value="Somatostatin/Cortistatin_C"/>
</dbReference>
<dbReference type="Pfam" id="PF03002">
    <property type="entry name" value="Somatostatin"/>
    <property type="match status" value="1"/>
</dbReference>
<organism>
    <name type="scientific">Anguilla anguilla</name>
    <name type="common">European freshwater eel</name>
    <name type="synonym">Muraena anguilla</name>
    <dbReference type="NCBI Taxonomy" id="7936"/>
    <lineage>
        <taxon>Eukaryota</taxon>
        <taxon>Metazoa</taxon>
        <taxon>Chordata</taxon>
        <taxon>Craniata</taxon>
        <taxon>Vertebrata</taxon>
        <taxon>Euteleostomi</taxon>
        <taxon>Actinopterygii</taxon>
        <taxon>Neopterygii</taxon>
        <taxon>Teleostei</taxon>
        <taxon>Anguilliformes</taxon>
        <taxon>Anguillidae</taxon>
        <taxon>Anguilla</taxon>
    </lineage>
</organism>
<proteinExistence type="evidence at protein level"/>
<comment type="function">
    <text>Somatostatin inhibits the release of somatotropin.</text>
</comment>
<comment type="subcellular location">
    <subcellularLocation>
        <location>Secreted</location>
    </subcellularLocation>
</comment>
<comment type="similarity">
    <text evidence="1">Belongs to the somatostatin family.</text>
</comment>
<reference key="1">
    <citation type="journal article" date="1988" name="Gen. Comp. Endocrinol.">
        <title>Somatostatin-related and glucagon-related peptides with unusual structural features from the European eel (Anguilla anguilla).</title>
        <authorList>
            <person name="Conlon J.M."/>
            <person name="Deacon C.F."/>
            <person name="Hazon N."/>
            <person name="Henderson I.W."/>
            <person name="Thim L."/>
        </authorList>
    </citation>
    <scope>PROTEIN SEQUENCE</scope>
    <source>
        <tissue>Pancreas</tissue>
    </source>
</reference>